<dbReference type="EC" id="2.4.1.250" evidence="1"/>
<dbReference type="EMBL" id="AP009044">
    <property type="protein sequence ID" value="BAF53437.1"/>
    <property type="molecule type" value="Genomic_DNA"/>
</dbReference>
<dbReference type="RefSeq" id="WP_011013628.1">
    <property type="nucleotide sequence ID" value="NC_009342.1"/>
</dbReference>
<dbReference type="SMR" id="A4QB40"/>
<dbReference type="CAZy" id="GT4">
    <property type="family name" value="Glycosyltransferase Family 4"/>
</dbReference>
<dbReference type="GeneID" id="1021208"/>
<dbReference type="KEGG" id="cgt:cgR_0473"/>
<dbReference type="HOGENOM" id="CLU_009583_2_3_11"/>
<dbReference type="PhylomeDB" id="A4QB40"/>
<dbReference type="Proteomes" id="UP000006698">
    <property type="component" value="Chromosome"/>
</dbReference>
<dbReference type="GO" id="GO:0008375">
    <property type="term" value="F:acetylglucosaminyltransferase activity"/>
    <property type="evidence" value="ECO:0007669"/>
    <property type="project" value="UniProtKB-UniRule"/>
</dbReference>
<dbReference type="GO" id="GO:0102710">
    <property type="term" value="F:D-inositol-3-phosphate glycosyltransferase activity"/>
    <property type="evidence" value="ECO:0007669"/>
    <property type="project" value="UniProtKB-EC"/>
</dbReference>
<dbReference type="GO" id="GO:0000287">
    <property type="term" value="F:magnesium ion binding"/>
    <property type="evidence" value="ECO:0007669"/>
    <property type="project" value="UniProtKB-UniRule"/>
</dbReference>
<dbReference type="GO" id="GO:0010125">
    <property type="term" value="P:mycothiol biosynthetic process"/>
    <property type="evidence" value="ECO:0007669"/>
    <property type="project" value="UniProtKB-UniRule"/>
</dbReference>
<dbReference type="CDD" id="cd03800">
    <property type="entry name" value="GT4_sucrose_synthase"/>
    <property type="match status" value="1"/>
</dbReference>
<dbReference type="Gene3D" id="3.40.50.2000">
    <property type="entry name" value="Glycogen Phosphorylase B"/>
    <property type="match status" value="2"/>
</dbReference>
<dbReference type="HAMAP" id="MF_01695">
    <property type="entry name" value="MshA"/>
    <property type="match status" value="1"/>
</dbReference>
<dbReference type="InterPro" id="IPR001296">
    <property type="entry name" value="Glyco_trans_1"/>
</dbReference>
<dbReference type="InterPro" id="IPR028098">
    <property type="entry name" value="Glyco_trans_4-like_N"/>
</dbReference>
<dbReference type="InterPro" id="IPR017814">
    <property type="entry name" value="Mycothiol_biosynthesis_MshA"/>
</dbReference>
<dbReference type="NCBIfam" id="TIGR03449">
    <property type="entry name" value="mycothiol_MshA"/>
    <property type="match status" value="1"/>
</dbReference>
<dbReference type="PANTHER" id="PTHR12526:SF510">
    <property type="entry name" value="D-INOSITOL 3-PHOSPHATE GLYCOSYLTRANSFERASE"/>
    <property type="match status" value="1"/>
</dbReference>
<dbReference type="PANTHER" id="PTHR12526">
    <property type="entry name" value="GLYCOSYLTRANSFERASE"/>
    <property type="match status" value="1"/>
</dbReference>
<dbReference type="Pfam" id="PF13579">
    <property type="entry name" value="Glyco_trans_4_4"/>
    <property type="match status" value="1"/>
</dbReference>
<dbReference type="Pfam" id="PF00534">
    <property type="entry name" value="Glycos_transf_1"/>
    <property type="match status" value="1"/>
</dbReference>
<dbReference type="SUPFAM" id="SSF53756">
    <property type="entry name" value="UDP-Glycosyltransferase/glycogen phosphorylase"/>
    <property type="match status" value="1"/>
</dbReference>
<keyword id="KW-0328">Glycosyltransferase</keyword>
<keyword id="KW-0460">Magnesium</keyword>
<keyword id="KW-0479">Metal-binding</keyword>
<keyword id="KW-0808">Transferase</keyword>
<gene>
    <name evidence="1" type="primary">mshA</name>
    <name type="ordered locus">cgR_0473</name>
</gene>
<accession>A4QB40</accession>
<protein>
    <recommendedName>
        <fullName>D-inositol 3-phosphate glycosyltransferase</fullName>
        <ecNumber evidence="1">2.4.1.250</ecNumber>
    </recommendedName>
    <alternativeName>
        <fullName evidence="1">N-acetylglucosamine-inositol-phosphate N-acetylglucosaminyltransferase</fullName>
        <shortName evidence="1">GlcNAc-Ins-P N-acetylglucosaminyltransferase</shortName>
    </alternativeName>
</protein>
<name>MSHA_CORGB</name>
<organism>
    <name type="scientific">Corynebacterium glutamicum (strain R)</name>
    <dbReference type="NCBI Taxonomy" id="340322"/>
    <lineage>
        <taxon>Bacteria</taxon>
        <taxon>Bacillati</taxon>
        <taxon>Actinomycetota</taxon>
        <taxon>Actinomycetes</taxon>
        <taxon>Mycobacteriales</taxon>
        <taxon>Corynebacteriaceae</taxon>
        <taxon>Corynebacterium</taxon>
    </lineage>
</organism>
<comment type="function">
    <text evidence="1">Catalyzes the transfer of a N-acetyl-glucosamine moiety to 1D-myo-inositol 3-phosphate to produce 1D-myo-inositol 2-acetamido-2-deoxy-glucopyranoside 3-phosphate in the mycothiol biosynthesis pathway.</text>
</comment>
<comment type="catalytic activity">
    <reaction evidence="1">
        <text>1D-myo-inositol 3-phosphate + UDP-N-acetyl-alpha-D-glucosamine = 1D-myo-inositol 2-acetamido-2-deoxy-alpha-D-glucopyranoside 3-phosphate + UDP + H(+)</text>
        <dbReference type="Rhea" id="RHEA:26188"/>
        <dbReference type="ChEBI" id="CHEBI:15378"/>
        <dbReference type="ChEBI" id="CHEBI:57705"/>
        <dbReference type="ChEBI" id="CHEBI:58223"/>
        <dbReference type="ChEBI" id="CHEBI:58401"/>
        <dbReference type="ChEBI" id="CHEBI:58892"/>
        <dbReference type="EC" id="2.4.1.250"/>
    </reaction>
</comment>
<comment type="subunit">
    <text evidence="1">Homodimer.</text>
</comment>
<comment type="similarity">
    <text evidence="1">Belongs to the glycosyltransferase group 1 family. MshA subfamily.</text>
</comment>
<evidence type="ECO:0000255" key="1">
    <source>
        <dbReference type="HAMAP-Rule" id="MF_01695"/>
    </source>
</evidence>
<sequence>MRVAMISMHTSPLQQPGTGDSGGMNVYILSTATELAKQGIEVDIYTRATRPSQGEIVRVAENLRVINIAAGPYEGLSKEELPTQLAAFTGGMLSFTRREKVTYDLIHSHYWLSGQVGWLLRDLWRIPLIHTAHTLAAVKNSYRDDSDTPESEARRICEQQLVDNADVLAVNTQEEMQDLMHHYDADPDRISVVSPGADVELYSPGNDRATERSRRELGIPLHTKVVAFVGRLQPFKGPQVLIKAVAALFDRDPDRNLRVIICGGPSGPNATPDTYRHMAEELGVEKRIRFLDPRPPSELVAVYRAADIVAVPSFNESFGLVAMEAQASGTPVIAARVGGLPIAVAEGETGLLVDGHSPHAWADALATLLDDDETRIRMGEDAVEHARTFSWAATAAQLSSLYNDAIANENVDGETHHG</sequence>
<reference key="1">
    <citation type="journal article" date="2007" name="Microbiology">
        <title>Comparative analysis of the Corynebacterium glutamicum group and complete genome sequence of strain R.</title>
        <authorList>
            <person name="Yukawa H."/>
            <person name="Omumasaba C.A."/>
            <person name="Nonaka H."/>
            <person name="Kos P."/>
            <person name="Okai N."/>
            <person name="Suzuki N."/>
            <person name="Suda M."/>
            <person name="Tsuge Y."/>
            <person name="Watanabe J."/>
            <person name="Ikeda Y."/>
            <person name="Vertes A.A."/>
            <person name="Inui M."/>
        </authorList>
    </citation>
    <scope>NUCLEOTIDE SEQUENCE [LARGE SCALE GENOMIC DNA]</scope>
    <source>
        <strain>R</strain>
    </source>
</reference>
<proteinExistence type="inferred from homology"/>
<feature type="chain" id="PRO_0000400118" description="D-inositol 3-phosphate glycosyltransferase">
    <location>
        <begin position="1"/>
        <end position="418"/>
    </location>
</feature>
<feature type="binding site" evidence="1">
    <location>
        <position position="9"/>
    </location>
    <ligand>
        <name>1D-myo-inositol 3-phosphate</name>
        <dbReference type="ChEBI" id="CHEBI:58401"/>
    </ligand>
</feature>
<feature type="binding site" evidence="1">
    <location>
        <begin position="15"/>
        <end position="16"/>
    </location>
    <ligand>
        <name>UDP-N-acetyl-alpha-D-glucosamine</name>
        <dbReference type="ChEBI" id="CHEBI:57705"/>
    </ligand>
</feature>
<feature type="binding site" evidence="1">
    <location>
        <begin position="20"/>
        <end position="25"/>
    </location>
    <ligand>
        <name>1D-myo-inositol 3-phosphate</name>
        <dbReference type="ChEBI" id="CHEBI:58401"/>
    </ligand>
</feature>
<feature type="binding site" evidence="1">
    <location>
        <position position="23"/>
    </location>
    <ligand>
        <name>UDP-N-acetyl-alpha-D-glucosamine</name>
        <dbReference type="ChEBI" id="CHEBI:57705"/>
    </ligand>
</feature>
<feature type="binding site" evidence="1">
    <location>
        <position position="78"/>
    </location>
    <ligand>
        <name>1D-myo-inositol 3-phosphate</name>
        <dbReference type="ChEBI" id="CHEBI:58401"/>
    </ligand>
</feature>
<feature type="binding site" evidence="1">
    <location>
        <position position="110"/>
    </location>
    <ligand>
        <name>1D-myo-inositol 3-phosphate</name>
        <dbReference type="ChEBI" id="CHEBI:58401"/>
    </ligand>
</feature>
<feature type="binding site" evidence="1">
    <location>
        <position position="134"/>
    </location>
    <ligand>
        <name>1D-myo-inositol 3-phosphate</name>
        <dbReference type="ChEBI" id="CHEBI:58401"/>
    </ligand>
</feature>
<feature type="binding site" evidence="1">
    <location>
        <position position="154"/>
    </location>
    <ligand>
        <name>1D-myo-inositol 3-phosphate</name>
        <dbReference type="ChEBI" id="CHEBI:58401"/>
    </ligand>
</feature>
<feature type="binding site" evidence="1">
    <location>
        <position position="231"/>
    </location>
    <ligand>
        <name>UDP-N-acetyl-alpha-D-glucosamine</name>
        <dbReference type="ChEBI" id="CHEBI:57705"/>
    </ligand>
</feature>
<feature type="binding site" evidence="1">
    <location>
        <position position="236"/>
    </location>
    <ligand>
        <name>UDP-N-acetyl-alpha-D-glucosamine</name>
        <dbReference type="ChEBI" id="CHEBI:57705"/>
    </ligand>
</feature>
<feature type="binding site" evidence="1">
    <location>
        <position position="294"/>
    </location>
    <ligand>
        <name>UDP-N-acetyl-alpha-D-glucosamine</name>
        <dbReference type="ChEBI" id="CHEBI:57705"/>
    </ligand>
</feature>
<feature type="binding site" evidence="1">
    <location>
        <position position="303"/>
    </location>
    <ligand>
        <name>Mg(2+)</name>
        <dbReference type="ChEBI" id="CHEBI:18420"/>
    </ligand>
</feature>
<feature type="binding site" evidence="1">
    <location>
        <position position="304"/>
    </location>
    <ligand>
        <name>Mg(2+)</name>
        <dbReference type="ChEBI" id="CHEBI:18420"/>
    </ligand>
</feature>
<feature type="binding site" evidence="1">
    <location>
        <position position="306"/>
    </location>
    <ligand>
        <name>Mg(2+)</name>
        <dbReference type="ChEBI" id="CHEBI:18420"/>
    </ligand>
</feature>
<feature type="binding site" evidence="1">
    <location>
        <position position="316"/>
    </location>
    <ligand>
        <name>UDP-N-acetyl-alpha-D-glucosamine</name>
        <dbReference type="ChEBI" id="CHEBI:57705"/>
    </ligand>
</feature>
<feature type="binding site" evidence="1">
    <location>
        <position position="324"/>
    </location>
    <ligand>
        <name>UDP-N-acetyl-alpha-D-glucosamine</name>
        <dbReference type="ChEBI" id="CHEBI:57705"/>
    </ligand>
</feature>
<feature type="binding site" evidence="1">
    <location>
        <position position="330"/>
    </location>
    <ligand>
        <name>Mg(2+)</name>
        <dbReference type="ChEBI" id="CHEBI:18420"/>
    </ligand>
</feature>